<keyword id="KW-0732">Signal</keyword>
<organism>
    <name type="scientific">Escherichia coli O6:K15:H31 (strain 536 / UPEC)</name>
    <dbReference type="NCBI Taxonomy" id="362663"/>
    <lineage>
        <taxon>Bacteria</taxon>
        <taxon>Pseudomonadati</taxon>
        <taxon>Pseudomonadota</taxon>
        <taxon>Gammaproteobacteria</taxon>
        <taxon>Enterobacterales</taxon>
        <taxon>Enterobacteriaceae</taxon>
        <taxon>Escherichia</taxon>
    </lineage>
</organism>
<dbReference type="EMBL" id="CP000247">
    <property type="protein sequence ID" value="ABG68983.1"/>
    <property type="molecule type" value="Genomic_DNA"/>
</dbReference>
<dbReference type="RefSeq" id="WP_000847791.1">
    <property type="nucleotide sequence ID" value="NC_008253.1"/>
</dbReference>
<dbReference type="KEGG" id="ecp:ECP_0970"/>
<dbReference type="HOGENOM" id="CLU_073782_2_0_6"/>
<dbReference type="Proteomes" id="UP000009182">
    <property type="component" value="Chromosome"/>
</dbReference>
<dbReference type="HAMAP" id="MF_00789">
    <property type="entry name" value="UPF0319"/>
    <property type="match status" value="1"/>
</dbReference>
<dbReference type="InterPro" id="IPR018635">
    <property type="entry name" value="UPF0319"/>
</dbReference>
<dbReference type="NCBIfam" id="NF047712">
    <property type="entry name" value="CrliSynInhib"/>
    <property type="match status" value="1"/>
</dbReference>
<dbReference type="NCBIfam" id="NF002967">
    <property type="entry name" value="PRK03641.1"/>
    <property type="match status" value="1"/>
</dbReference>
<dbReference type="PANTHER" id="PTHR38108">
    <property type="entry name" value="UPF0319 PROTEIN YCCT"/>
    <property type="match status" value="1"/>
</dbReference>
<dbReference type="PANTHER" id="PTHR38108:SF1">
    <property type="entry name" value="UPF0319 PROTEIN YCCT"/>
    <property type="match status" value="1"/>
</dbReference>
<dbReference type="Pfam" id="PF09829">
    <property type="entry name" value="DUF2057"/>
    <property type="match status" value="1"/>
</dbReference>
<name>YCCT_ECOL5</name>
<accession>Q0TJ96</accession>
<sequence length="220" mass="24594">MKTGIVTTLIALCLPVSVFATTLRLSTDVDLLVLDGKKVSSSLLRGADSIELDNGPHQLVFRVEKTIHLSNSEERLYISPPLVVSFNTQLINQVNFRLPRLENEREANHFDAAPRLELLDGDATPIPVKLDILAITSTAKTIDYEVEVERYNKSAKRASLPQFATMMADDSTLLSGVSELDAIPPQSQVLTEQRLKYWFKLADPQTRNTFLQWAEKQPSS</sequence>
<comment type="similarity">
    <text evidence="1">Belongs to the UPF0319 family.</text>
</comment>
<evidence type="ECO:0000255" key="1">
    <source>
        <dbReference type="HAMAP-Rule" id="MF_00789"/>
    </source>
</evidence>
<gene>
    <name evidence="1" type="primary">yccT</name>
    <name type="ordered locus">ECP_0970</name>
</gene>
<protein>
    <recommendedName>
        <fullName evidence="1">UPF0319 protein YccT</fullName>
    </recommendedName>
</protein>
<proteinExistence type="inferred from homology"/>
<reference key="1">
    <citation type="journal article" date="2006" name="Mol. Microbiol.">
        <title>Role of pathogenicity island-associated integrases in the genome plasticity of uropathogenic Escherichia coli strain 536.</title>
        <authorList>
            <person name="Hochhut B."/>
            <person name="Wilde C."/>
            <person name="Balling G."/>
            <person name="Middendorf B."/>
            <person name="Dobrindt U."/>
            <person name="Brzuszkiewicz E."/>
            <person name="Gottschalk G."/>
            <person name="Carniel E."/>
            <person name="Hacker J."/>
        </authorList>
    </citation>
    <scope>NUCLEOTIDE SEQUENCE [LARGE SCALE GENOMIC DNA]</scope>
    <source>
        <strain>536 / UPEC</strain>
    </source>
</reference>
<feature type="signal peptide" evidence="1">
    <location>
        <begin position="1"/>
        <end position="20"/>
    </location>
</feature>
<feature type="chain" id="PRO_1000046899" description="UPF0319 protein YccT">
    <location>
        <begin position="21"/>
        <end position="220"/>
    </location>
</feature>